<comment type="similarity">
    <text evidence="1">Belongs to the UPF0337 (CsbD) family.</text>
</comment>
<comment type="sequence caution" evidence="1">
    <conflict type="erroneous initiation">
        <sequence resource="EMBL-CDS" id="AAN83442"/>
    </conflict>
</comment>
<reference key="1">
    <citation type="journal article" date="2002" name="Proc. Natl. Acad. Sci. U.S.A.">
        <title>Extensive mosaic structure revealed by the complete genome sequence of uropathogenic Escherichia coli.</title>
        <authorList>
            <person name="Welch R.A."/>
            <person name="Burland V."/>
            <person name="Plunkett G. III"/>
            <person name="Redford P."/>
            <person name="Roesch P."/>
            <person name="Rasko D."/>
            <person name="Buckles E.L."/>
            <person name="Liou S.-R."/>
            <person name="Boutin A."/>
            <person name="Hackett J."/>
            <person name="Stroud D."/>
            <person name="Mayhew G.F."/>
            <person name="Rose D.J."/>
            <person name="Zhou S."/>
            <person name="Schwartz D.C."/>
            <person name="Perna N.T."/>
            <person name="Mobley H.L.T."/>
            <person name="Donnenberg M.S."/>
            <person name="Blattner F.R."/>
        </authorList>
    </citation>
    <scope>NUCLEOTIDE SEQUENCE [LARGE SCALE GENOMIC DNA]</scope>
    <source>
        <strain>CFT073 / ATCC 700928 / UPEC</strain>
    </source>
</reference>
<keyword id="KW-1185">Reference proteome</keyword>
<gene>
    <name type="primary">yjbJ</name>
    <name type="ordered locus">c5016</name>
</gene>
<proteinExistence type="inferred from homology"/>
<feature type="chain" id="PRO_0000210001" description="UPF0337 protein YjbJ">
    <location>
        <begin position="1"/>
        <end position="69"/>
    </location>
</feature>
<organism>
    <name type="scientific">Escherichia coli O6:H1 (strain CFT073 / ATCC 700928 / UPEC)</name>
    <dbReference type="NCBI Taxonomy" id="199310"/>
    <lineage>
        <taxon>Bacteria</taxon>
        <taxon>Pseudomonadati</taxon>
        <taxon>Pseudomonadota</taxon>
        <taxon>Gammaproteobacteria</taxon>
        <taxon>Enterobacterales</taxon>
        <taxon>Enterobacteriaceae</taxon>
        <taxon>Escherichia</taxon>
    </lineage>
</organism>
<accession>Q8FB32</accession>
<name>YJBJ_ECOL6</name>
<evidence type="ECO:0000305" key="1"/>
<protein>
    <recommendedName>
        <fullName>UPF0337 protein YjbJ</fullName>
    </recommendedName>
</protein>
<sequence length="69" mass="8349">MNKDEAGGNWKQFKGKVKEQWGKLTDDDMTIIEGKRDQLVGKIQERYGYQKDQAEKEVDSWEKRHDYRW</sequence>
<dbReference type="EMBL" id="AE014075">
    <property type="protein sequence ID" value="AAN83442.1"/>
    <property type="status" value="ALT_INIT"/>
    <property type="molecule type" value="Genomic_DNA"/>
</dbReference>
<dbReference type="RefSeq" id="WP_001296638.1">
    <property type="nucleotide sequence ID" value="NZ_CP051263.1"/>
</dbReference>
<dbReference type="SMR" id="Q8FB32"/>
<dbReference type="STRING" id="199310.c5016"/>
<dbReference type="KEGG" id="ecc:c5016"/>
<dbReference type="eggNOG" id="COG3237">
    <property type="taxonomic scope" value="Bacteria"/>
</dbReference>
<dbReference type="HOGENOM" id="CLU_135567_4_1_6"/>
<dbReference type="Proteomes" id="UP000001410">
    <property type="component" value="Chromosome"/>
</dbReference>
<dbReference type="Gene3D" id="1.10.1470.10">
    <property type="entry name" value="YjbJ"/>
    <property type="match status" value="1"/>
</dbReference>
<dbReference type="InterPro" id="IPR008462">
    <property type="entry name" value="CsbD"/>
</dbReference>
<dbReference type="InterPro" id="IPR050423">
    <property type="entry name" value="UPF0337_stress_rsp"/>
</dbReference>
<dbReference type="InterPro" id="IPR026042">
    <property type="entry name" value="YjbJ"/>
</dbReference>
<dbReference type="InterPro" id="IPR036629">
    <property type="entry name" value="YjbJ_sf"/>
</dbReference>
<dbReference type="NCBIfam" id="NF007748">
    <property type="entry name" value="PRK10428.1"/>
    <property type="match status" value="1"/>
</dbReference>
<dbReference type="PANTHER" id="PTHR34977">
    <property type="entry name" value="UPF0337 PROTEIN YJBJ"/>
    <property type="match status" value="1"/>
</dbReference>
<dbReference type="PANTHER" id="PTHR34977:SF1">
    <property type="entry name" value="UPF0337 PROTEIN YJBJ"/>
    <property type="match status" value="1"/>
</dbReference>
<dbReference type="Pfam" id="PF05532">
    <property type="entry name" value="CsbD"/>
    <property type="match status" value="1"/>
</dbReference>
<dbReference type="PIRSF" id="PIRSF039008">
    <property type="entry name" value="YjbJ"/>
    <property type="match status" value="1"/>
</dbReference>
<dbReference type="SUPFAM" id="SSF69047">
    <property type="entry name" value="Hypothetical protein YjbJ"/>
    <property type="match status" value="1"/>
</dbReference>